<keyword id="KW-0067">ATP-binding</keyword>
<keyword id="KW-0319">Glycerol metabolism</keyword>
<keyword id="KW-0418">Kinase</keyword>
<keyword id="KW-0547">Nucleotide-binding</keyword>
<keyword id="KW-1185">Reference proteome</keyword>
<keyword id="KW-0808">Transferase</keyword>
<evidence type="ECO:0000255" key="1">
    <source>
        <dbReference type="HAMAP-Rule" id="MF_00186"/>
    </source>
</evidence>
<name>GLPK_NOSS1</name>
<gene>
    <name evidence="1" type="primary">glpK</name>
    <name type="ordered locus">all1811</name>
</gene>
<protein>
    <recommendedName>
        <fullName evidence="1">Glycerol kinase</fullName>
        <ecNumber evidence="1">2.7.1.30</ecNumber>
    </recommendedName>
    <alternativeName>
        <fullName evidence="1">ATP:glycerol 3-phosphotransferase</fullName>
    </alternativeName>
    <alternativeName>
        <fullName evidence="1">Glycerokinase</fullName>
        <shortName evidence="1">GK</shortName>
    </alternativeName>
</protein>
<accession>Q8YW05</accession>
<dbReference type="EC" id="2.7.1.30" evidence="1"/>
<dbReference type="EMBL" id="BA000019">
    <property type="protein sequence ID" value="BAB73510.1"/>
    <property type="molecule type" value="Genomic_DNA"/>
</dbReference>
<dbReference type="PIR" id="AE2032">
    <property type="entry name" value="AE2032"/>
</dbReference>
<dbReference type="RefSeq" id="WP_010995979.1">
    <property type="nucleotide sequence ID" value="NZ_RSCN01000019.1"/>
</dbReference>
<dbReference type="SMR" id="Q8YW05"/>
<dbReference type="STRING" id="103690.gene:10493829"/>
<dbReference type="KEGG" id="ana:all1811"/>
<dbReference type="eggNOG" id="COG0554">
    <property type="taxonomic scope" value="Bacteria"/>
</dbReference>
<dbReference type="OrthoDB" id="9805576at2"/>
<dbReference type="UniPathway" id="UPA00618">
    <property type="reaction ID" value="UER00672"/>
</dbReference>
<dbReference type="Proteomes" id="UP000002483">
    <property type="component" value="Chromosome"/>
</dbReference>
<dbReference type="GO" id="GO:0005829">
    <property type="term" value="C:cytosol"/>
    <property type="evidence" value="ECO:0007669"/>
    <property type="project" value="TreeGrafter"/>
</dbReference>
<dbReference type="GO" id="GO:0005524">
    <property type="term" value="F:ATP binding"/>
    <property type="evidence" value="ECO:0007669"/>
    <property type="project" value="UniProtKB-UniRule"/>
</dbReference>
<dbReference type="GO" id="GO:0004370">
    <property type="term" value="F:glycerol kinase activity"/>
    <property type="evidence" value="ECO:0000250"/>
    <property type="project" value="UniProtKB"/>
</dbReference>
<dbReference type="GO" id="GO:0019563">
    <property type="term" value="P:glycerol catabolic process"/>
    <property type="evidence" value="ECO:0007669"/>
    <property type="project" value="UniProtKB-UniRule"/>
</dbReference>
<dbReference type="GO" id="GO:0006071">
    <property type="term" value="P:glycerol metabolic process"/>
    <property type="evidence" value="ECO:0000250"/>
    <property type="project" value="UniProtKB"/>
</dbReference>
<dbReference type="GO" id="GO:0006072">
    <property type="term" value="P:glycerol-3-phosphate metabolic process"/>
    <property type="evidence" value="ECO:0007669"/>
    <property type="project" value="InterPro"/>
</dbReference>
<dbReference type="CDD" id="cd07786">
    <property type="entry name" value="FGGY_EcGK_like"/>
    <property type="match status" value="1"/>
</dbReference>
<dbReference type="FunFam" id="3.30.420.40:FF:000007">
    <property type="entry name" value="Glycerol kinase"/>
    <property type="match status" value="1"/>
</dbReference>
<dbReference type="FunFam" id="3.30.420.40:FF:000008">
    <property type="entry name" value="Glycerol kinase"/>
    <property type="match status" value="1"/>
</dbReference>
<dbReference type="Gene3D" id="3.30.420.40">
    <property type="match status" value="2"/>
</dbReference>
<dbReference type="HAMAP" id="MF_00186">
    <property type="entry name" value="Glycerol_kin"/>
    <property type="match status" value="1"/>
</dbReference>
<dbReference type="InterPro" id="IPR043129">
    <property type="entry name" value="ATPase_NBD"/>
</dbReference>
<dbReference type="InterPro" id="IPR000577">
    <property type="entry name" value="Carb_kinase_FGGY"/>
</dbReference>
<dbReference type="InterPro" id="IPR018483">
    <property type="entry name" value="Carb_kinase_FGGY_CS"/>
</dbReference>
<dbReference type="InterPro" id="IPR018485">
    <property type="entry name" value="FGGY_C"/>
</dbReference>
<dbReference type="InterPro" id="IPR018484">
    <property type="entry name" value="FGGY_N"/>
</dbReference>
<dbReference type="InterPro" id="IPR005999">
    <property type="entry name" value="Glycerol_kin"/>
</dbReference>
<dbReference type="NCBIfam" id="TIGR01311">
    <property type="entry name" value="glycerol_kin"/>
    <property type="match status" value="1"/>
</dbReference>
<dbReference type="NCBIfam" id="NF000756">
    <property type="entry name" value="PRK00047.1"/>
    <property type="match status" value="1"/>
</dbReference>
<dbReference type="PANTHER" id="PTHR10196:SF69">
    <property type="entry name" value="GLYCEROL KINASE"/>
    <property type="match status" value="1"/>
</dbReference>
<dbReference type="PANTHER" id="PTHR10196">
    <property type="entry name" value="SUGAR KINASE"/>
    <property type="match status" value="1"/>
</dbReference>
<dbReference type="Pfam" id="PF02782">
    <property type="entry name" value="FGGY_C"/>
    <property type="match status" value="1"/>
</dbReference>
<dbReference type="Pfam" id="PF00370">
    <property type="entry name" value="FGGY_N"/>
    <property type="match status" value="1"/>
</dbReference>
<dbReference type="PIRSF" id="PIRSF000538">
    <property type="entry name" value="GlpK"/>
    <property type="match status" value="1"/>
</dbReference>
<dbReference type="SUPFAM" id="SSF53067">
    <property type="entry name" value="Actin-like ATPase domain"/>
    <property type="match status" value="2"/>
</dbReference>
<dbReference type="PROSITE" id="PS00445">
    <property type="entry name" value="FGGY_KINASES_2"/>
    <property type="match status" value="1"/>
</dbReference>
<feature type="chain" id="PRO_0000059429" description="Glycerol kinase">
    <location>
        <begin position="1"/>
        <end position="500"/>
    </location>
</feature>
<feature type="binding site" evidence="1">
    <location>
        <position position="16"/>
    </location>
    <ligand>
        <name>ADP</name>
        <dbReference type="ChEBI" id="CHEBI:456216"/>
    </ligand>
</feature>
<feature type="binding site" evidence="1">
    <location>
        <position position="16"/>
    </location>
    <ligand>
        <name>ATP</name>
        <dbReference type="ChEBI" id="CHEBI:30616"/>
    </ligand>
</feature>
<feature type="binding site" evidence="1">
    <location>
        <position position="16"/>
    </location>
    <ligand>
        <name>sn-glycerol 3-phosphate</name>
        <dbReference type="ChEBI" id="CHEBI:57597"/>
    </ligand>
</feature>
<feature type="binding site" evidence="1">
    <location>
        <position position="17"/>
    </location>
    <ligand>
        <name>ATP</name>
        <dbReference type="ChEBI" id="CHEBI:30616"/>
    </ligand>
</feature>
<feature type="binding site" evidence="1">
    <location>
        <position position="20"/>
    </location>
    <ligand>
        <name>ADP</name>
        <dbReference type="ChEBI" id="CHEBI:456216"/>
    </ligand>
</feature>
<feature type="binding site" evidence="1">
    <location>
        <position position="86"/>
    </location>
    <ligand>
        <name>glycerol</name>
        <dbReference type="ChEBI" id="CHEBI:17754"/>
    </ligand>
</feature>
<feature type="binding site" evidence="1">
    <location>
        <position position="86"/>
    </location>
    <ligand>
        <name>sn-glycerol 3-phosphate</name>
        <dbReference type="ChEBI" id="CHEBI:57597"/>
    </ligand>
</feature>
<feature type="binding site" evidence="1">
    <location>
        <position position="87"/>
    </location>
    <ligand>
        <name>glycerol</name>
        <dbReference type="ChEBI" id="CHEBI:17754"/>
    </ligand>
</feature>
<feature type="binding site" evidence="1">
    <location>
        <position position="87"/>
    </location>
    <ligand>
        <name>sn-glycerol 3-phosphate</name>
        <dbReference type="ChEBI" id="CHEBI:57597"/>
    </ligand>
</feature>
<feature type="binding site" evidence="1">
    <location>
        <position position="138"/>
    </location>
    <ligand>
        <name>glycerol</name>
        <dbReference type="ChEBI" id="CHEBI:17754"/>
    </ligand>
</feature>
<feature type="binding site" evidence="1">
    <location>
        <position position="138"/>
    </location>
    <ligand>
        <name>sn-glycerol 3-phosphate</name>
        <dbReference type="ChEBI" id="CHEBI:57597"/>
    </ligand>
</feature>
<feature type="binding site" evidence="1">
    <location>
        <position position="243"/>
    </location>
    <ligand>
        <name>glycerol</name>
        <dbReference type="ChEBI" id="CHEBI:17754"/>
    </ligand>
</feature>
<feature type="binding site" evidence="1">
    <location>
        <position position="243"/>
    </location>
    <ligand>
        <name>sn-glycerol 3-phosphate</name>
        <dbReference type="ChEBI" id="CHEBI:57597"/>
    </ligand>
</feature>
<feature type="binding site" evidence="1">
    <location>
        <position position="244"/>
    </location>
    <ligand>
        <name>glycerol</name>
        <dbReference type="ChEBI" id="CHEBI:17754"/>
    </ligand>
</feature>
<feature type="binding site" evidence="1">
    <location>
        <position position="265"/>
    </location>
    <ligand>
        <name>ADP</name>
        <dbReference type="ChEBI" id="CHEBI:456216"/>
    </ligand>
</feature>
<feature type="binding site" evidence="1">
    <location>
        <position position="265"/>
    </location>
    <ligand>
        <name>ATP</name>
        <dbReference type="ChEBI" id="CHEBI:30616"/>
    </ligand>
</feature>
<feature type="binding site" evidence="1">
    <location>
        <position position="313"/>
    </location>
    <ligand>
        <name>ADP</name>
        <dbReference type="ChEBI" id="CHEBI:456216"/>
    </ligand>
</feature>
<feature type="binding site" evidence="1">
    <location>
        <position position="313"/>
    </location>
    <ligand>
        <name>ATP</name>
        <dbReference type="ChEBI" id="CHEBI:30616"/>
    </ligand>
</feature>
<feature type="binding site" evidence="1">
    <location>
        <position position="317"/>
    </location>
    <ligand>
        <name>ATP</name>
        <dbReference type="ChEBI" id="CHEBI:30616"/>
    </ligand>
</feature>
<feature type="binding site" evidence="1">
    <location>
        <position position="414"/>
    </location>
    <ligand>
        <name>ADP</name>
        <dbReference type="ChEBI" id="CHEBI:456216"/>
    </ligand>
</feature>
<feature type="binding site" evidence="1">
    <location>
        <position position="414"/>
    </location>
    <ligand>
        <name>ATP</name>
        <dbReference type="ChEBI" id="CHEBI:30616"/>
    </ligand>
</feature>
<feature type="binding site" evidence="1">
    <location>
        <position position="418"/>
    </location>
    <ligand>
        <name>ADP</name>
        <dbReference type="ChEBI" id="CHEBI:456216"/>
    </ligand>
</feature>
<sequence>MQISSSGYILALDLGTTGNRAFIFNNAGKIVAQAYKELTQHYPQPGWLEHDAEEIWQDTCWVMKTAIVNAQISPSEIAAIGLTVQRETCLLWDKTTGRPLHKAIVWQDRRTAPLCHQLQEKGYAQEIYSRTGLVVDAYFSATKLRWLLDYITGVDLKNVLAGTIDTWILWKLTGGKVHATDHSNASRTMLMNLKTGEWDEQLLEILQIPAHILPQIQPSLGKFGVTDTSLLDAAIPITAILGDQQAALFGHGCDRPGLMKCTYGTGSFLVAHTGSNIVRSQHQLISTIAWTQADKQENINIGYALEGSMFTSGACIQWLRDGIKLIKTAAETETMANQVADNGGVYFVPAFSGLGAPYWDMNARGAFFGITASVQPQHLVRAVLEAIAYQVLEVVQAINASCSSPMQRLIVDGGACENNFLMQFQADVLGIPVERPTMRDTTVQGAAFAAGLAVGFWDSYTALVNQRQIDRIFEPGEGSQNATANFAIWQKAVKRSLDWV</sequence>
<comment type="function">
    <text evidence="1">Key enzyme in the regulation of glycerol uptake and metabolism. Catalyzes the phosphorylation of glycerol to yield sn-glycerol 3-phosphate.</text>
</comment>
<comment type="catalytic activity">
    <reaction evidence="1">
        <text>glycerol + ATP = sn-glycerol 3-phosphate + ADP + H(+)</text>
        <dbReference type="Rhea" id="RHEA:21644"/>
        <dbReference type="ChEBI" id="CHEBI:15378"/>
        <dbReference type="ChEBI" id="CHEBI:17754"/>
        <dbReference type="ChEBI" id="CHEBI:30616"/>
        <dbReference type="ChEBI" id="CHEBI:57597"/>
        <dbReference type="ChEBI" id="CHEBI:456216"/>
        <dbReference type="EC" id="2.7.1.30"/>
    </reaction>
</comment>
<comment type="activity regulation">
    <text evidence="1">Inhibited by fructose 1,6-bisphosphate (FBP).</text>
</comment>
<comment type="pathway">
    <text evidence="1">Polyol metabolism; glycerol degradation via glycerol kinase pathway; sn-glycerol 3-phosphate from glycerol: step 1/1.</text>
</comment>
<comment type="similarity">
    <text evidence="1">Belongs to the FGGY kinase family.</text>
</comment>
<reference key="1">
    <citation type="journal article" date="2001" name="DNA Res.">
        <title>Complete genomic sequence of the filamentous nitrogen-fixing cyanobacterium Anabaena sp. strain PCC 7120.</title>
        <authorList>
            <person name="Kaneko T."/>
            <person name="Nakamura Y."/>
            <person name="Wolk C.P."/>
            <person name="Kuritz T."/>
            <person name="Sasamoto S."/>
            <person name="Watanabe A."/>
            <person name="Iriguchi M."/>
            <person name="Ishikawa A."/>
            <person name="Kawashima K."/>
            <person name="Kimura T."/>
            <person name="Kishida Y."/>
            <person name="Kohara M."/>
            <person name="Matsumoto M."/>
            <person name="Matsuno A."/>
            <person name="Muraki A."/>
            <person name="Nakazaki N."/>
            <person name="Shimpo S."/>
            <person name="Sugimoto M."/>
            <person name="Takazawa M."/>
            <person name="Yamada M."/>
            <person name="Yasuda M."/>
            <person name="Tabata S."/>
        </authorList>
    </citation>
    <scope>NUCLEOTIDE SEQUENCE [LARGE SCALE GENOMIC DNA]</scope>
    <source>
        <strain>PCC 7120 / SAG 25.82 / UTEX 2576</strain>
    </source>
</reference>
<organism>
    <name type="scientific">Nostoc sp. (strain PCC 7120 / SAG 25.82 / UTEX 2576)</name>
    <dbReference type="NCBI Taxonomy" id="103690"/>
    <lineage>
        <taxon>Bacteria</taxon>
        <taxon>Bacillati</taxon>
        <taxon>Cyanobacteriota</taxon>
        <taxon>Cyanophyceae</taxon>
        <taxon>Nostocales</taxon>
        <taxon>Nostocaceae</taxon>
        <taxon>Nostoc</taxon>
    </lineage>
</organism>
<proteinExistence type="inferred from homology"/>